<evidence type="ECO:0000255" key="1">
    <source>
        <dbReference type="HAMAP-Rule" id="MF_01382"/>
    </source>
</evidence>
<evidence type="ECO:0000305" key="2"/>
<comment type="function">
    <text evidence="1">Part of the Sec protein translocase complex. Interacts with the SecYEG preprotein conducting channel. Has a central role in coupling the hydrolysis of ATP to the transfer of proteins into and across the cell membrane, serving as an ATP-driven molecular motor driving the stepwise translocation of polypeptide chains across the membrane.</text>
</comment>
<comment type="catalytic activity">
    <reaction evidence="1">
        <text>ATP + H2O + cellular proteinSide 1 = ADP + phosphate + cellular proteinSide 2.</text>
        <dbReference type="EC" id="7.4.2.8"/>
    </reaction>
</comment>
<comment type="subunit">
    <text evidence="1">Monomer and homodimer. Part of the essential Sec protein translocation apparatus which comprises SecA, SecYEG and auxiliary proteins SecDF. Other proteins may also be involved.</text>
</comment>
<comment type="subcellular location">
    <subcellularLocation>
        <location evidence="1">Cell membrane</location>
        <topology evidence="1">Peripheral membrane protein</topology>
        <orientation evidence="1">Cytoplasmic side</orientation>
    </subcellularLocation>
    <subcellularLocation>
        <location evidence="1">Cytoplasm</location>
    </subcellularLocation>
    <text evidence="1">Distribution is 50-50.</text>
</comment>
<comment type="similarity">
    <text evidence="1">Belongs to the SecA family.</text>
</comment>
<comment type="sequence caution" evidence="2">
    <conflict type="erroneous initiation">
        <sequence resource="EMBL-CDS" id="BAC18382"/>
    </conflict>
    <text>Extended N-terminus.</text>
</comment>
<feature type="chain" id="PRO_0000318340" description="Protein translocase subunit SecA 2">
    <location>
        <begin position="1"/>
        <end position="763"/>
    </location>
</feature>
<feature type="binding site" evidence="1">
    <location>
        <position position="83"/>
    </location>
    <ligand>
        <name>ATP</name>
        <dbReference type="ChEBI" id="CHEBI:30616"/>
    </ligand>
</feature>
<feature type="binding site" evidence="1">
    <location>
        <begin position="101"/>
        <end position="105"/>
    </location>
    <ligand>
        <name>ATP</name>
        <dbReference type="ChEBI" id="CHEBI:30616"/>
    </ligand>
</feature>
<feature type="binding site" evidence="1">
    <location>
        <position position="490"/>
    </location>
    <ligand>
        <name>ATP</name>
        <dbReference type="ChEBI" id="CHEBI:30616"/>
    </ligand>
</feature>
<gene>
    <name evidence="1" type="primary">secA2</name>
    <name type="ordered locus">CE1572</name>
</gene>
<protein>
    <recommendedName>
        <fullName evidence="1">Protein translocase subunit SecA 2</fullName>
        <ecNumber evidence="1">7.4.2.8</ecNumber>
    </recommendedName>
</protein>
<sequence>MAGFDWFWKALGGKQGRNQKRSLAIVDQAEAHTRDLEALDDAHLAARARTLVGDGTPQDPAELLAVLGIAAHRTLGMRPFPVQSQAVLRLIEGDVVHMATGEGKTLVGAMAATGLGLQGKTVHSITINDYLAVRDAEWMRPLVEFFGLSVGAISETMTPEQRREAYRCDVVYGSVSEIGFDVLRDQLITRRADAVQRRADVAIIDEADSVLVDEALVPLVLAGNQPGHAPRGKITEVVRRLKENDHYTVSEDRRNVFLTDKGAAALEQALGITSLYDDEHVGTTLVQVNLALHAQALLIRDIHYIVRDGKVQLIDASRGRVADLQRWPDGLQAAVEAKEGLAVTEGGRILDTITLQALVGRYPMVCGMTGTAVEATDQLRTFYNLHVSVIERNNPLRRFDEADRIYATMAEKNRAIIEEIAHLHHTGQPVLVGTHDVAESEELADALRDLDIEVSVLNAKNDAEEARIIAEAGDIGRVTVSTQMAGRGTDVRLGGPDESHYDQVVELGGLAVIGTARHRTARLDNQLRGRAGRQGDPGLSLFFVSLEDDVVVTGGAGESVTAQPDATGLIDSNRVRDWVAHCQRVTEGQLLEIHSQTWKYNKLLADQRVIIDERRARLLDTDLAWRELSERAQDRAAGLEGVDREVLEQAARDIMLYHLDLNWSEHLALMDDVRESIHLRAIARETPLDEYHRIAVREFKTLAQQAVDDAVETFRTVVIDDRGAHLEDAGLARPSATWTYMVSDNPLAGSGNSVISGIGNIFR</sequence>
<reference key="1">
    <citation type="journal article" date="2003" name="Genome Res.">
        <title>Comparative complete genome sequence analysis of the amino acid replacements responsible for the thermostability of Corynebacterium efficiens.</title>
        <authorList>
            <person name="Nishio Y."/>
            <person name="Nakamura Y."/>
            <person name="Kawarabayasi Y."/>
            <person name="Usuda Y."/>
            <person name="Kimura E."/>
            <person name="Sugimoto S."/>
            <person name="Matsui K."/>
            <person name="Yamagishi A."/>
            <person name="Kikuchi H."/>
            <person name="Ikeo K."/>
            <person name="Gojobori T."/>
        </authorList>
    </citation>
    <scope>NUCLEOTIDE SEQUENCE [LARGE SCALE GENOMIC DNA]</scope>
    <source>
        <strain>DSM 44549 / YS-314 / AJ 12310 / JCM 11189 / NBRC 100395</strain>
    </source>
</reference>
<accession>Q8FTJ6</accession>
<dbReference type="EC" id="7.4.2.8" evidence="1"/>
<dbReference type="EMBL" id="BA000035">
    <property type="protein sequence ID" value="BAC18382.1"/>
    <property type="status" value="ALT_INIT"/>
    <property type="molecule type" value="Genomic_DNA"/>
</dbReference>
<dbReference type="RefSeq" id="WP_035108882.1">
    <property type="nucleotide sequence ID" value="NC_004369.1"/>
</dbReference>
<dbReference type="SMR" id="Q8FTJ6"/>
<dbReference type="STRING" id="196164.gene:10741991"/>
<dbReference type="KEGG" id="cef:CE1572"/>
<dbReference type="eggNOG" id="COG0653">
    <property type="taxonomic scope" value="Bacteria"/>
</dbReference>
<dbReference type="HOGENOM" id="CLU_005314_3_2_11"/>
<dbReference type="OrthoDB" id="9805579at2"/>
<dbReference type="Proteomes" id="UP000001409">
    <property type="component" value="Chromosome"/>
</dbReference>
<dbReference type="GO" id="GO:0031522">
    <property type="term" value="C:cell envelope Sec protein transport complex"/>
    <property type="evidence" value="ECO:0007669"/>
    <property type="project" value="TreeGrafter"/>
</dbReference>
<dbReference type="GO" id="GO:0005829">
    <property type="term" value="C:cytosol"/>
    <property type="evidence" value="ECO:0007669"/>
    <property type="project" value="TreeGrafter"/>
</dbReference>
<dbReference type="GO" id="GO:0005886">
    <property type="term" value="C:plasma membrane"/>
    <property type="evidence" value="ECO:0007669"/>
    <property type="project" value="UniProtKB-SubCell"/>
</dbReference>
<dbReference type="GO" id="GO:0005524">
    <property type="term" value="F:ATP binding"/>
    <property type="evidence" value="ECO:0007669"/>
    <property type="project" value="UniProtKB-UniRule"/>
</dbReference>
<dbReference type="GO" id="GO:0008564">
    <property type="term" value="F:protein-exporting ATPase activity"/>
    <property type="evidence" value="ECO:0007669"/>
    <property type="project" value="UniProtKB-EC"/>
</dbReference>
<dbReference type="GO" id="GO:0065002">
    <property type="term" value="P:intracellular protein transmembrane transport"/>
    <property type="evidence" value="ECO:0007669"/>
    <property type="project" value="UniProtKB-UniRule"/>
</dbReference>
<dbReference type="GO" id="GO:0017038">
    <property type="term" value="P:protein import"/>
    <property type="evidence" value="ECO:0007669"/>
    <property type="project" value="InterPro"/>
</dbReference>
<dbReference type="GO" id="GO:0006605">
    <property type="term" value="P:protein targeting"/>
    <property type="evidence" value="ECO:0007669"/>
    <property type="project" value="UniProtKB-UniRule"/>
</dbReference>
<dbReference type="GO" id="GO:0043952">
    <property type="term" value="P:protein transport by the Sec complex"/>
    <property type="evidence" value="ECO:0007669"/>
    <property type="project" value="TreeGrafter"/>
</dbReference>
<dbReference type="CDD" id="cd17928">
    <property type="entry name" value="DEXDc_SecA"/>
    <property type="match status" value="1"/>
</dbReference>
<dbReference type="CDD" id="cd18803">
    <property type="entry name" value="SF2_C_secA"/>
    <property type="match status" value="1"/>
</dbReference>
<dbReference type="FunFam" id="3.40.50.300:FF:000429">
    <property type="entry name" value="Preprotein translocase subunit SecA"/>
    <property type="match status" value="1"/>
</dbReference>
<dbReference type="Gene3D" id="1.10.3060.10">
    <property type="entry name" value="Helical scaffold and wing domains of SecA"/>
    <property type="match status" value="1"/>
</dbReference>
<dbReference type="Gene3D" id="3.40.50.300">
    <property type="entry name" value="P-loop containing nucleotide triphosphate hydrolases"/>
    <property type="match status" value="3"/>
</dbReference>
<dbReference type="Gene3D" id="3.90.1440.10">
    <property type="entry name" value="SecA, preprotein cross-linking domain"/>
    <property type="match status" value="1"/>
</dbReference>
<dbReference type="HAMAP" id="MF_01382">
    <property type="entry name" value="SecA"/>
    <property type="match status" value="1"/>
</dbReference>
<dbReference type="InterPro" id="IPR014001">
    <property type="entry name" value="Helicase_ATP-bd"/>
</dbReference>
<dbReference type="InterPro" id="IPR001650">
    <property type="entry name" value="Helicase_C-like"/>
</dbReference>
<dbReference type="InterPro" id="IPR027417">
    <property type="entry name" value="P-loop_NTPase"/>
</dbReference>
<dbReference type="InterPro" id="IPR000185">
    <property type="entry name" value="SecA"/>
</dbReference>
<dbReference type="InterPro" id="IPR026389">
    <property type="entry name" value="SecA_Actinobact-type"/>
</dbReference>
<dbReference type="InterPro" id="IPR011115">
    <property type="entry name" value="SecA_DEAD"/>
</dbReference>
<dbReference type="InterPro" id="IPR014018">
    <property type="entry name" value="SecA_motor_DEAD"/>
</dbReference>
<dbReference type="InterPro" id="IPR011130">
    <property type="entry name" value="SecA_preprotein_X-link_dom"/>
</dbReference>
<dbReference type="InterPro" id="IPR044722">
    <property type="entry name" value="SecA_SF2_C"/>
</dbReference>
<dbReference type="InterPro" id="IPR011116">
    <property type="entry name" value="SecA_Wing/Scaffold"/>
</dbReference>
<dbReference type="InterPro" id="IPR036266">
    <property type="entry name" value="SecA_Wing/Scaffold_sf"/>
</dbReference>
<dbReference type="InterPro" id="IPR036670">
    <property type="entry name" value="SecA_X-link_sf"/>
</dbReference>
<dbReference type="NCBIfam" id="TIGR04221">
    <property type="entry name" value="SecA2_Mycobac"/>
    <property type="match status" value="1"/>
</dbReference>
<dbReference type="PANTHER" id="PTHR30612:SF0">
    <property type="entry name" value="CHLOROPLAST PROTEIN-TRANSPORTING ATPASE"/>
    <property type="match status" value="1"/>
</dbReference>
<dbReference type="PANTHER" id="PTHR30612">
    <property type="entry name" value="SECA INNER MEMBRANE COMPONENT OF SEC PROTEIN SECRETION SYSTEM"/>
    <property type="match status" value="1"/>
</dbReference>
<dbReference type="Pfam" id="PF21090">
    <property type="entry name" value="P-loop_SecA"/>
    <property type="match status" value="1"/>
</dbReference>
<dbReference type="Pfam" id="PF07517">
    <property type="entry name" value="SecA_DEAD"/>
    <property type="match status" value="1"/>
</dbReference>
<dbReference type="Pfam" id="PF01043">
    <property type="entry name" value="SecA_PP_bind"/>
    <property type="match status" value="1"/>
</dbReference>
<dbReference type="Pfam" id="PF07516">
    <property type="entry name" value="SecA_SW"/>
    <property type="match status" value="1"/>
</dbReference>
<dbReference type="PRINTS" id="PR00906">
    <property type="entry name" value="SECA"/>
</dbReference>
<dbReference type="SMART" id="SM00957">
    <property type="entry name" value="SecA_DEAD"/>
    <property type="match status" value="1"/>
</dbReference>
<dbReference type="SMART" id="SM00958">
    <property type="entry name" value="SecA_PP_bind"/>
    <property type="match status" value="1"/>
</dbReference>
<dbReference type="SUPFAM" id="SSF81886">
    <property type="entry name" value="Helical scaffold and wing domains of SecA"/>
    <property type="match status" value="1"/>
</dbReference>
<dbReference type="SUPFAM" id="SSF52540">
    <property type="entry name" value="P-loop containing nucleoside triphosphate hydrolases"/>
    <property type="match status" value="2"/>
</dbReference>
<dbReference type="SUPFAM" id="SSF81767">
    <property type="entry name" value="Pre-protein crosslinking domain of SecA"/>
    <property type="match status" value="1"/>
</dbReference>
<dbReference type="PROSITE" id="PS51196">
    <property type="entry name" value="SECA_MOTOR_DEAD"/>
    <property type="match status" value="1"/>
</dbReference>
<name>SECA2_COREF</name>
<proteinExistence type="inferred from homology"/>
<keyword id="KW-0067">ATP-binding</keyword>
<keyword id="KW-1003">Cell membrane</keyword>
<keyword id="KW-0963">Cytoplasm</keyword>
<keyword id="KW-0472">Membrane</keyword>
<keyword id="KW-0547">Nucleotide-binding</keyword>
<keyword id="KW-0653">Protein transport</keyword>
<keyword id="KW-1185">Reference proteome</keyword>
<keyword id="KW-1278">Translocase</keyword>
<keyword id="KW-0811">Translocation</keyword>
<keyword id="KW-0813">Transport</keyword>
<organism>
    <name type="scientific">Corynebacterium efficiens (strain DSM 44549 / YS-314 / AJ 12310 / JCM 11189 / NBRC 100395)</name>
    <dbReference type="NCBI Taxonomy" id="196164"/>
    <lineage>
        <taxon>Bacteria</taxon>
        <taxon>Bacillati</taxon>
        <taxon>Actinomycetota</taxon>
        <taxon>Actinomycetes</taxon>
        <taxon>Mycobacteriales</taxon>
        <taxon>Corynebacteriaceae</taxon>
        <taxon>Corynebacterium</taxon>
    </lineage>
</organism>